<keyword id="KW-0067">ATP-binding</keyword>
<keyword id="KW-0119">Carbohydrate metabolism</keyword>
<keyword id="KW-0418">Kinase</keyword>
<keyword id="KW-0460">Magnesium</keyword>
<keyword id="KW-0479">Metal-binding</keyword>
<keyword id="KW-0511">Multifunctional enzyme</keyword>
<keyword id="KW-0547">Nucleotide-binding</keyword>
<keyword id="KW-0723">Serine/threonine-protein kinase</keyword>
<keyword id="KW-0808">Transferase</keyword>
<gene>
    <name evidence="1" type="primary">hprK</name>
    <name type="ordered locus">GTNG_3032</name>
</gene>
<dbReference type="EC" id="2.7.11.-" evidence="1"/>
<dbReference type="EC" id="2.7.4.-" evidence="1"/>
<dbReference type="EMBL" id="CP000557">
    <property type="protein sequence ID" value="ABO68377.1"/>
    <property type="molecule type" value="Genomic_DNA"/>
</dbReference>
<dbReference type="RefSeq" id="WP_008880316.1">
    <property type="nucleotide sequence ID" value="NC_009328.1"/>
</dbReference>
<dbReference type="SMR" id="A4ISS3"/>
<dbReference type="GeneID" id="87622819"/>
<dbReference type="KEGG" id="gtn:GTNG_3032"/>
<dbReference type="eggNOG" id="COG1493">
    <property type="taxonomic scope" value="Bacteria"/>
</dbReference>
<dbReference type="HOGENOM" id="CLU_052030_0_1_9"/>
<dbReference type="Proteomes" id="UP000001578">
    <property type="component" value="Chromosome"/>
</dbReference>
<dbReference type="GO" id="GO:0005524">
    <property type="term" value="F:ATP binding"/>
    <property type="evidence" value="ECO:0007669"/>
    <property type="project" value="UniProtKB-UniRule"/>
</dbReference>
<dbReference type="GO" id="GO:0000287">
    <property type="term" value="F:magnesium ion binding"/>
    <property type="evidence" value="ECO:0007669"/>
    <property type="project" value="UniProtKB-UniRule"/>
</dbReference>
<dbReference type="GO" id="GO:0000155">
    <property type="term" value="F:phosphorelay sensor kinase activity"/>
    <property type="evidence" value="ECO:0007669"/>
    <property type="project" value="InterPro"/>
</dbReference>
<dbReference type="GO" id="GO:0004674">
    <property type="term" value="F:protein serine/threonine kinase activity"/>
    <property type="evidence" value="ECO:0007669"/>
    <property type="project" value="UniProtKB-KW"/>
</dbReference>
<dbReference type="GO" id="GO:0004712">
    <property type="term" value="F:protein serine/threonine/tyrosine kinase activity"/>
    <property type="evidence" value="ECO:0007669"/>
    <property type="project" value="UniProtKB-UniRule"/>
</dbReference>
<dbReference type="GO" id="GO:0006109">
    <property type="term" value="P:regulation of carbohydrate metabolic process"/>
    <property type="evidence" value="ECO:0007669"/>
    <property type="project" value="UniProtKB-UniRule"/>
</dbReference>
<dbReference type="CDD" id="cd01918">
    <property type="entry name" value="HprK_C"/>
    <property type="match status" value="1"/>
</dbReference>
<dbReference type="FunFam" id="3.40.1390.20:FF:000002">
    <property type="entry name" value="HPr kinase/phosphorylase"/>
    <property type="match status" value="1"/>
</dbReference>
<dbReference type="FunFam" id="3.40.50.300:FF:000174">
    <property type="entry name" value="HPr kinase/phosphorylase"/>
    <property type="match status" value="1"/>
</dbReference>
<dbReference type="Gene3D" id="3.40.1390.20">
    <property type="entry name" value="HprK N-terminal domain-like"/>
    <property type="match status" value="1"/>
</dbReference>
<dbReference type="Gene3D" id="3.40.50.300">
    <property type="entry name" value="P-loop containing nucleotide triphosphate hydrolases"/>
    <property type="match status" value="1"/>
</dbReference>
<dbReference type="HAMAP" id="MF_01249">
    <property type="entry name" value="HPr_kinase"/>
    <property type="match status" value="1"/>
</dbReference>
<dbReference type="InterPro" id="IPR003755">
    <property type="entry name" value="HPr(Ser)_kin/Pase"/>
</dbReference>
<dbReference type="InterPro" id="IPR011104">
    <property type="entry name" value="Hpr_kin/Pase_C"/>
</dbReference>
<dbReference type="InterPro" id="IPR011126">
    <property type="entry name" value="Hpr_kin/Pase_Hpr_N"/>
</dbReference>
<dbReference type="InterPro" id="IPR027417">
    <property type="entry name" value="P-loop_NTPase"/>
</dbReference>
<dbReference type="InterPro" id="IPR028979">
    <property type="entry name" value="Ser_kin/Pase_Hpr-like_N_sf"/>
</dbReference>
<dbReference type="NCBIfam" id="TIGR00679">
    <property type="entry name" value="hpr-ser"/>
    <property type="match status" value="1"/>
</dbReference>
<dbReference type="PANTHER" id="PTHR30305:SF1">
    <property type="entry name" value="HPR KINASE_PHOSPHORYLASE"/>
    <property type="match status" value="1"/>
</dbReference>
<dbReference type="PANTHER" id="PTHR30305">
    <property type="entry name" value="PROTEIN YJDM-RELATED"/>
    <property type="match status" value="1"/>
</dbReference>
<dbReference type="Pfam" id="PF07475">
    <property type="entry name" value="Hpr_kinase_C"/>
    <property type="match status" value="1"/>
</dbReference>
<dbReference type="Pfam" id="PF02603">
    <property type="entry name" value="Hpr_kinase_N"/>
    <property type="match status" value="1"/>
</dbReference>
<dbReference type="SUPFAM" id="SSF75138">
    <property type="entry name" value="HprK N-terminal domain-like"/>
    <property type="match status" value="1"/>
</dbReference>
<dbReference type="SUPFAM" id="SSF53795">
    <property type="entry name" value="PEP carboxykinase-like"/>
    <property type="match status" value="1"/>
</dbReference>
<sequence>MPKVRTKDIIEQFQLELVSGAEGIYRPITTSDLSRPGIEMAGYFAYYPAERLQLLGRTELSFYETLTPEEKRARMQRLCTDITPGIIVSRGLDVPPELIEASERQSVPVMRSTMKTTRLSSRLTNYLESKLAPTTAVHGVLVDVYGVGVLITGKSGVGKSETALELVKRGHRLVADDCVEIRQEDEDTLIGSAPELIEHLLEIRGLGIINMMTLFGAGAVLPHKRISLVIDLELWDPEKQYDRLGLEEEKMKILDIELPRLTIPVRPGRNLAVIVEVAAMNFRLKRMGVNAAEEFSARLSDAIEEGERD</sequence>
<organism>
    <name type="scientific">Geobacillus thermodenitrificans (strain NG80-2)</name>
    <dbReference type="NCBI Taxonomy" id="420246"/>
    <lineage>
        <taxon>Bacteria</taxon>
        <taxon>Bacillati</taxon>
        <taxon>Bacillota</taxon>
        <taxon>Bacilli</taxon>
        <taxon>Bacillales</taxon>
        <taxon>Anoxybacillaceae</taxon>
        <taxon>Geobacillus</taxon>
    </lineage>
</organism>
<accession>A4ISS3</accession>
<reference key="1">
    <citation type="journal article" date="2007" name="Proc. Natl. Acad. Sci. U.S.A.">
        <title>Genome and proteome of long-chain alkane degrading Geobacillus thermodenitrificans NG80-2 isolated from a deep-subsurface oil reservoir.</title>
        <authorList>
            <person name="Feng L."/>
            <person name="Wang W."/>
            <person name="Cheng J."/>
            <person name="Ren Y."/>
            <person name="Zhao G."/>
            <person name="Gao C."/>
            <person name="Tang Y."/>
            <person name="Liu X."/>
            <person name="Han W."/>
            <person name="Peng X."/>
            <person name="Liu R."/>
            <person name="Wang L."/>
        </authorList>
    </citation>
    <scope>NUCLEOTIDE SEQUENCE [LARGE SCALE GENOMIC DNA]</scope>
    <source>
        <strain>NG80-2</strain>
    </source>
</reference>
<evidence type="ECO:0000255" key="1">
    <source>
        <dbReference type="HAMAP-Rule" id="MF_01249"/>
    </source>
</evidence>
<proteinExistence type="inferred from homology"/>
<comment type="function">
    <text evidence="1">Catalyzes the ATP- as well as the pyrophosphate-dependent phosphorylation of a specific serine residue in HPr, a phosphocarrier protein of the phosphoenolpyruvate-dependent sugar phosphotransferase system (PTS). HprK/P also catalyzes the pyrophosphate-producing, inorganic phosphate-dependent dephosphorylation (phosphorolysis) of seryl-phosphorylated HPr (P-Ser-HPr). The two antagonistic activities of HprK/P are regulated by several intracellular metabolites, which change their concentration in response to the absence or presence of rapidly metabolisable carbon sources (glucose, fructose, etc.) in the growth medium. Also phosphorylates/dephosphorylates the HPr-like catabolite repression protein crh on a specific serine residue. Therefore, by controlling the phosphorylation state of HPr and crh, HPrK/P is a sensor enzyme that plays a major role in the regulation of carbon metabolism and sugar transport: it mediates carbon catabolite repression (CCR), and regulates PTS-catalyzed carbohydrate uptake and inducer exclusion.</text>
</comment>
<comment type="catalytic activity">
    <reaction evidence="1">
        <text>[HPr protein]-L-serine + ATP = [HPr protein]-O-phospho-L-serine + ADP + H(+)</text>
        <dbReference type="Rhea" id="RHEA:46600"/>
        <dbReference type="Rhea" id="RHEA-COMP:11602"/>
        <dbReference type="Rhea" id="RHEA-COMP:11603"/>
        <dbReference type="ChEBI" id="CHEBI:15378"/>
        <dbReference type="ChEBI" id="CHEBI:29999"/>
        <dbReference type="ChEBI" id="CHEBI:30616"/>
        <dbReference type="ChEBI" id="CHEBI:83421"/>
        <dbReference type="ChEBI" id="CHEBI:456216"/>
    </reaction>
</comment>
<comment type="catalytic activity">
    <reaction evidence="1">
        <text>[HPr protein]-O-phospho-L-serine + phosphate + H(+) = [HPr protein]-L-serine + diphosphate</text>
        <dbReference type="Rhea" id="RHEA:46604"/>
        <dbReference type="Rhea" id="RHEA-COMP:11602"/>
        <dbReference type="Rhea" id="RHEA-COMP:11603"/>
        <dbReference type="ChEBI" id="CHEBI:15378"/>
        <dbReference type="ChEBI" id="CHEBI:29999"/>
        <dbReference type="ChEBI" id="CHEBI:33019"/>
        <dbReference type="ChEBI" id="CHEBI:43474"/>
        <dbReference type="ChEBI" id="CHEBI:83421"/>
    </reaction>
</comment>
<comment type="cofactor">
    <cofactor evidence="1">
        <name>Mg(2+)</name>
        <dbReference type="ChEBI" id="CHEBI:18420"/>
    </cofactor>
</comment>
<comment type="subunit">
    <text evidence="1">Homohexamer.</text>
</comment>
<comment type="domain">
    <text evidence="1">The Walker A ATP-binding motif also binds Pi and PPi.</text>
</comment>
<comment type="miscellaneous">
    <text evidence="1">Both phosphorylation and phosphorolysis are carried out by the same active site and suggest a common mechanism for both reactions.</text>
</comment>
<comment type="similarity">
    <text evidence="1">Belongs to the HPrK/P family.</text>
</comment>
<name>HPRK_GEOTN</name>
<feature type="chain" id="PRO_1000067149" description="HPr kinase/phosphorylase">
    <location>
        <begin position="1"/>
        <end position="309"/>
    </location>
</feature>
<feature type="region of interest" description="Important for the catalytic mechanism of both phosphorylation and dephosphorylation" evidence="1">
    <location>
        <begin position="201"/>
        <end position="210"/>
    </location>
</feature>
<feature type="region of interest" description="Important for the catalytic mechanism of dephosphorylation" evidence="1">
    <location>
        <begin position="264"/>
        <end position="269"/>
    </location>
</feature>
<feature type="active site" evidence="1">
    <location>
        <position position="138"/>
    </location>
</feature>
<feature type="active site" evidence="1">
    <location>
        <position position="159"/>
    </location>
</feature>
<feature type="active site" description="Proton acceptor; for phosphorylation activity. Proton donor; for dephosphorylation activity" evidence="1">
    <location>
        <position position="177"/>
    </location>
</feature>
<feature type="active site" evidence="1">
    <location>
        <position position="243"/>
    </location>
</feature>
<feature type="binding site" evidence="1">
    <location>
        <begin position="153"/>
        <end position="160"/>
    </location>
    <ligand>
        <name>ATP</name>
        <dbReference type="ChEBI" id="CHEBI:30616"/>
    </ligand>
</feature>
<feature type="binding site" evidence="1">
    <location>
        <position position="160"/>
    </location>
    <ligand>
        <name>Mg(2+)</name>
        <dbReference type="ChEBI" id="CHEBI:18420"/>
    </ligand>
</feature>
<feature type="binding site" evidence="1">
    <location>
        <position position="202"/>
    </location>
    <ligand>
        <name>Mg(2+)</name>
        <dbReference type="ChEBI" id="CHEBI:18420"/>
    </ligand>
</feature>
<protein>
    <recommendedName>
        <fullName evidence="1">HPr kinase/phosphorylase</fullName>
        <shortName evidence="1">HPrK/P</shortName>
        <ecNumber evidence="1">2.7.11.-</ecNumber>
        <ecNumber evidence="1">2.7.4.-</ecNumber>
    </recommendedName>
    <alternativeName>
        <fullName evidence="1">HPr(Ser) kinase/phosphorylase</fullName>
    </alternativeName>
</protein>